<accession>Q8XVI7</accession>
<organism>
    <name type="scientific">Ralstonia nicotianae (strain ATCC BAA-1114 / GMI1000)</name>
    <name type="common">Ralstonia solanacearum</name>
    <dbReference type="NCBI Taxonomy" id="267608"/>
    <lineage>
        <taxon>Bacteria</taxon>
        <taxon>Pseudomonadati</taxon>
        <taxon>Pseudomonadota</taxon>
        <taxon>Betaproteobacteria</taxon>
        <taxon>Burkholderiales</taxon>
        <taxon>Burkholderiaceae</taxon>
        <taxon>Ralstonia</taxon>
        <taxon>Ralstonia solanacearum species complex</taxon>
    </lineage>
</organism>
<proteinExistence type="inferred from homology"/>
<gene>
    <name evidence="1" type="primary">murG</name>
    <name type="ordered locus">RSc2844</name>
    <name type="ORF">RS00261</name>
</gene>
<feature type="chain" id="PRO_0000109200" description="UDP-N-acetylglucosamine--N-acetylmuramyl-(pentapeptide) pyrophosphoryl-undecaprenol N-acetylglucosamine transferase">
    <location>
        <begin position="1"/>
        <end position="365"/>
    </location>
</feature>
<feature type="binding site" evidence="1">
    <location>
        <begin position="20"/>
        <end position="22"/>
    </location>
    <ligand>
        <name>UDP-N-acetyl-alpha-D-glucosamine</name>
        <dbReference type="ChEBI" id="CHEBI:57705"/>
    </ligand>
</feature>
<feature type="binding site" evidence="1">
    <location>
        <position position="132"/>
    </location>
    <ligand>
        <name>UDP-N-acetyl-alpha-D-glucosamine</name>
        <dbReference type="ChEBI" id="CHEBI:57705"/>
    </ligand>
</feature>
<feature type="binding site" evidence="1">
    <location>
        <position position="168"/>
    </location>
    <ligand>
        <name>UDP-N-acetyl-alpha-D-glucosamine</name>
        <dbReference type="ChEBI" id="CHEBI:57705"/>
    </ligand>
</feature>
<feature type="binding site" evidence="1">
    <location>
        <position position="196"/>
    </location>
    <ligand>
        <name>UDP-N-acetyl-alpha-D-glucosamine</name>
        <dbReference type="ChEBI" id="CHEBI:57705"/>
    </ligand>
</feature>
<feature type="binding site" evidence="1">
    <location>
        <position position="253"/>
    </location>
    <ligand>
        <name>UDP-N-acetyl-alpha-D-glucosamine</name>
        <dbReference type="ChEBI" id="CHEBI:57705"/>
    </ligand>
</feature>
<feature type="binding site" evidence="1">
    <location>
        <position position="298"/>
    </location>
    <ligand>
        <name>UDP-N-acetyl-alpha-D-glucosamine</name>
        <dbReference type="ChEBI" id="CHEBI:57705"/>
    </ligand>
</feature>
<keyword id="KW-0131">Cell cycle</keyword>
<keyword id="KW-0132">Cell division</keyword>
<keyword id="KW-0997">Cell inner membrane</keyword>
<keyword id="KW-1003">Cell membrane</keyword>
<keyword id="KW-0133">Cell shape</keyword>
<keyword id="KW-0961">Cell wall biogenesis/degradation</keyword>
<keyword id="KW-0328">Glycosyltransferase</keyword>
<keyword id="KW-0472">Membrane</keyword>
<keyword id="KW-0573">Peptidoglycan synthesis</keyword>
<keyword id="KW-1185">Reference proteome</keyword>
<keyword id="KW-0808">Transferase</keyword>
<protein>
    <recommendedName>
        <fullName evidence="1">UDP-N-acetylglucosamine--N-acetylmuramyl-(pentapeptide) pyrophosphoryl-undecaprenol N-acetylglucosamine transferase</fullName>
        <ecNumber evidence="1">2.4.1.227</ecNumber>
    </recommendedName>
    <alternativeName>
        <fullName evidence="1">Undecaprenyl-PP-MurNAc-pentapeptide-UDPGlcNAc GlcNAc transferase</fullName>
    </alternativeName>
</protein>
<reference key="1">
    <citation type="journal article" date="2002" name="Nature">
        <title>Genome sequence of the plant pathogen Ralstonia solanacearum.</title>
        <authorList>
            <person name="Salanoubat M."/>
            <person name="Genin S."/>
            <person name="Artiguenave F."/>
            <person name="Gouzy J."/>
            <person name="Mangenot S."/>
            <person name="Arlat M."/>
            <person name="Billault A."/>
            <person name="Brottier P."/>
            <person name="Camus J.-C."/>
            <person name="Cattolico L."/>
            <person name="Chandler M."/>
            <person name="Choisne N."/>
            <person name="Claudel-Renard C."/>
            <person name="Cunnac S."/>
            <person name="Demange N."/>
            <person name="Gaspin C."/>
            <person name="Lavie M."/>
            <person name="Moisan A."/>
            <person name="Robert C."/>
            <person name="Saurin W."/>
            <person name="Schiex T."/>
            <person name="Siguier P."/>
            <person name="Thebault P."/>
            <person name="Whalen M."/>
            <person name="Wincker P."/>
            <person name="Levy M."/>
            <person name="Weissenbach J."/>
            <person name="Boucher C.A."/>
        </authorList>
    </citation>
    <scope>NUCLEOTIDE SEQUENCE [LARGE SCALE GENOMIC DNA]</scope>
    <source>
        <strain>ATCC BAA-1114 / GMI1000</strain>
    </source>
</reference>
<sequence length="365" mass="37996">MTARVSADLPRTLLVMAGGTGGHIFPALSVARLLAARGWQVVWLGNASGMEGQLVPKHGFPLESVRFGGVRGKGLVTKFLLPLNLLRAFWQSLGVVRRVRPNVVLGMGGYITFPGGMMSVLLGAPLVLHEQNSIAGLANRVLARVADRVLCAFPGALPGAEWVGNPIRADLAALPSPQARYAERSGPLRVLVVGGSLGAAALNDVVPRALALLPADTRPIVIHQAGAKQIDTLRANYAAVGIDETHAQAVPFIDDMAAAYAQADLVICRAGAMTVSEVAAAGVAALFVPFPHAVDDHQTTNARFLSERGAALLVPQPSLGPASLADTLASLTRAQLADMAAKAREQARPEAAERVADICVAAARA</sequence>
<dbReference type="EC" id="2.4.1.227" evidence="1"/>
<dbReference type="EMBL" id="AL646052">
    <property type="protein sequence ID" value="CAD16551.1"/>
    <property type="molecule type" value="Genomic_DNA"/>
</dbReference>
<dbReference type="RefSeq" id="WP_011002750.1">
    <property type="nucleotide sequence ID" value="NC_003295.1"/>
</dbReference>
<dbReference type="SMR" id="Q8XVI7"/>
<dbReference type="STRING" id="267608.RSc2844"/>
<dbReference type="CAZy" id="GT28">
    <property type="family name" value="Glycosyltransferase Family 28"/>
</dbReference>
<dbReference type="EnsemblBacteria" id="CAD16551">
    <property type="protein sequence ID" value="CAD16551"/>
    <property type="gene ID" value="RSc2844"/>
</dbReference>
<dbReference type="KEGG" id="rso:RSc2844"/>
<dbReference type="eggNOG" id="COG0707">
    <property type="taxonomic scope" value="Bacteria"/>
</dbReference>
<dbReference type="HOGENOM" id="CLU_037404_2_0_4"/>
<dbReference type="UniPathway" id="UPA00219"/>
<dbReference type="Proteomes" id="UP000001436">
    <property type="component" value="Chromosome"/>
</dbReference>
<dbReference type="GO" id="GO:0005886">
    <property type="term" value="C:plasma membrane"/>
    <property type="evidence" value="ECO:0007669"/>
    <property type="project" value="UniProtKB-SubCell"/>
</dbReference>
<dbReference type="GO" id="GO:0051991">
    <property type="term" value="F:UDP-N-acetyl-D-glucosamine:N-acetylmuramoyl-L-alanyl-D-glutamyl-meso-2,6-diaminopimelyl-D-alanyl-D-alanine-diphosphoundecaprenol 4-beta-N-acetylglucosaminlytransferase activity"/>
    <property type="evidence" value="ECO:0007669"/>
    <property type="project" value="RHEA"/>
</dbReference>
<dbReference type="GO" id="GO:0050511">
    <property type="term" value="F:undecaprenyldiphospho-muramoylpentapeptide beta-N-acetylglucosaminyltransferase activity"/>
    <property type="evidence" value="ECO:0007669"/>
    <property type="project" value="UniProtKB-UniRule"/>
</dbReference>
<dbReference type="GO" id="GO:0005975">
    <property type="term" value="P:carbohydrate metabolic process"/>
    <property type="evidence" value="ECO:0007669"/>
    <property type="project" value="InterPro"/>
</dbReference>
<dbReference type="GO" id="GO:0051301">
    <property type="term" value="P:cell division"/>
    <property type="evidence" value="ECO:0007669"/>
    <property type="project" value="UniProtKB-KW"/>
</dbReference>
<dbReference type="GO" id="GO:0071555">
    <property type="term" value="P:cell wall organization"/>
    <property type="evidence" value="ECO:0007669"/>
    <property type="project" value="UniProtKB-KW"/>
</dbReference>
<dbReference type="GO" id="GO:0030259">
    <property type="term" value="P:lipid glycosylation"/>
    <property type="evidence" value="ECO:0007669"/>
    <property type="project" value="UniProtKB-UniRule"/>
</dbReference>
<dbReference type="GO" id="GO:0009252">
    <property type="term" value="P:peptidoglycan biosynthetic process"/>
    <property type="evidence" value="ECO:0007669"/>
    <property type="project" value="UniProtKB-UniRule"/>
</dbReference>
<dbReference type="GO" id="GO:0008360">
    <property type="term" value="P:regulation of cell shape"/>
    <property type="evidence" value="ECO:0007669"/>
    <property type="project" value="UniProtKB-KW"/>
</dbReference>
<dbReference type="CDD" id="cd03785">
    <property type="entry name" value="GT28_MurG"/>
    <property type="match status" value="1"/>
</dbReference>
<dbReference type="Gene3D" id="3.40.50.2000">
    <property type="entry name" value="Glycogen Phosphorylase B"/>
    <property type="match status" value="2"/>
</dbReference>
<dbReference type="HAMAP" id="MF_00033">
    <property type="entry name" value="MurG"/>
    <property type="match status" value="1"/>
</dbReference>
<dbReference type="InterPro" id="IPR006009">
    <property type="entry name" value="GlcNAc_MurG"/>
</dbReference>
<dbReference type="InterPro" id="IPR007235">
    <property type="entry name" value="Glyco_trans_28_C"/>
</dbReference>
<dbReference type="InterPro" id="IPR004276">
    <property type="entry name" value="GlycoTrans_28_N"/>
</dbReference>
<dbReference type="NCBIfam" id="TIGR01133">
    <property type="entry name" value="murG"/>
    <property type="match status" value="1"/>
</dbReference>
<dbReference type="PANTHER" id="PTHR21015:SF22">
    <property type="entry name" value="GLYCOSYLTRANSFERASE"/>
    <property type="match status" value="1"/>
</dbReference>
<dbReference type="PANTHER" id="PTHR21015">
    <property type="entry name" value="UDP-N-ACETYLGLUCOSAMINE--N-ACETYLMURAMYL-(PENTAPEPTIDE) PYROPHOSPHORYL-UNDECAPRENOL N-ACETYLGLUCOSAMINE TRANSFERASE 1"/>
    <property type="match status" value="1"/>
</dbReference>
<dbReference type="Pfam" id="PF04101">
    <property type="entry name" value="Glyco_tran_28_C"/>
    <property type="match status" value="1"/>
</dbReference>
<dbReference type="Pfam" id="PF03033">
    <property type="entry name" value="Glyco_transf_28"/>
    <property type="match status" value="1"/>
</dbReference>
<dbReference type="SUPFAM" id="SSF53756">
    <property type="entry name" value="UDP-Glycosyltransferase/glycogen phosphorylase"/>
    <property type="match status" value="1"/>
</dbReference>
<name>MURG_RALN1</name>
<comment type="function">
    <text evidence="1">Cell wall formation. Catalyzes the transfer of a GlcNAc subunit on undecaprenyl-pyrophosphoryl-MurNAc-pentapeptide (lipid intermediate I) to form undecaprenyl-pyrophosphoryl-MurNAc-(pentapeptide)GlcNAc (lipid intermediate II).</text>
</comment>
<comment type="catalytic activity">
    <reaction evidence="1">
        <text>di-trans,octa-cis-undecaprenyl diphospho-N-acetyl-alpha-D-muramoyl-L-alanyl-D-glutamyl-meso-2,6-diaminopimeloyl-D-alanyl-D-alanine + UDP-N-acetyl-alpha-D-glucosamine = di-trans,octa-cis-undecaprenyl diphospho-[N-acetyl-alpha-D-glucosaminyl-(1-&gt;4)]-N-acetyl-alpha-D-muramoyl-L-alanyl-D-glutamyl-meso-2,6-diaminopimeloyl-D-alanyl-D-alanine + UDP + H(+)</text>
        <dbReference type="Rhea" id="RHEA:31227"/>
        <dbReference type="ChEBI" id="CHEBI:15378"/>
        <dbReference type="ChEBI" id="CHEBI:57705"/>
        <dbReference type="ChEBI" id="CHEBI:58223"/>
        <dbReference type="ChEBI" id="CHEBI:61387"/>
        <dbReference type="ChEBI" id="CHEBI:61388"/>
        <dbReference type="EC" id="2.4.1.227"/>
    </reaction>
</comment>
<comment type="pathway">
    <text evidence="1">Cell wall biogenesis; peptidoglycan biosynthesis.</text>
</comment>
<comment type="subcellular location">
    <subcellularLocation>
        <location evidence="1">Cell inner membrane</location>
        <topology evidence="1">Peripheral membrane protein</topology>
        <orientation evidence="1">Cytoplasmic side</orientation>
    </subcellularLocation>
</comment>
<comment type="similarity">
    <text evidence="1">Belongs to the glycosyltransferase 28 family. MurG subfamily.</text>
</comment>
<evidence type="ECO:0000255" key="1">
    <source>
        <dbReference type="HAMAP-Rule" id="MF_00033"/>
    </source>
</evidence>